<gene>
    <name evidence="1" type="primary">hutH</name>
    <name type="ordered locus">xcc-b100_2681</name>
</gene>
<reference key="1">
    <citation type="journal article" date="2008" name="J. Biotechnol.">
        <title>The genome of Xanthomonas campestris pv. campestris B100 and its use for the reconstruction of metabolic pathways involved in xanthan biosynthesis.</title>
        <authorList>
            <person name="Vorhoelter F.-J."/>
            <person name="Schneiker S."/>
            <person name="Goesmann A."/>
            <person name="Krause L."/>
            <person name="Bekel T."/>
            <person name="Kaiser O."/>
            <person name="Linke B."/>
            <person name="Patschkowski T."/>
            <person name="Rueckert C."/>
            <person name="Schmid J."/>
            <person name="Sidhu V.K."/>
            <person name="Sieber V."/>
            <person name="Tauch A."/>
            <person name="Watt S.A."/>
            <person name="Weisshaar B."/>
            <person name="Becker A."/>
            <person name="Niehaus K."/>
            <person name="Puehler A."/>
        </authorList>
    </citation>
    <scope>NUCLEOTIDE SEQUENCE [LARGE SCALE GENOMIC DNA]</scope>
    <source>
        <strain>B100</strain>
    </source>
</reference>
<evidence type="ECO:0000255" key="1">
    <source>
        <dbReference type="HAMAP-Rule" id="MF_00229"/>
    </source>
</evidence>
<proteinExistence type="inferred from homology"/>
<keyword id="KW-0963">Cytoplasm</keyword>
<keyword id="KW-0369">Histidine metabolism</keyword>
<keyword id="KW-0456">Lyase</keyword>
<sequence length="513" mass="53125">MSASVVLQPGQVTLAQWRALYRGAEVTLDPACAQAVLRSAQTVEAIVARGEPVYGVNTGFGKLASVRIERDDLQTLQRNIVLSHAAGVGDPTPVPVVRLMMALKLTSLAQGASGIQPDTLALLEAMLRQGITPVVPCQGSVGASGDLAPLSHLAAVMIGVGEAFVGDQRLPAADALARAQLQPRVLGAKEGLALLNGTQFSTACALAGLFEIETVLQAALVTGALSVEAAKGSDTPFDARIHALRGQPGQIATAAALRALMAESAIRESHRLGDVRVQDPYCLRCQPQVMGAALDVMRQAARTLEIEANGVSDNPLVFSDTGEALSGGNFHAEPVAFAADMLALAVCEIGSISERRTAMLVDPALSGLPAFLTPRPGLNSGFMIPQVTAAALVSENKQCAYPASVDSIPTSANQEDHVSMAAHGARRLLAMADNAAHVIGIELLAAVQGCDFHAPLRSSAALEAARALLRAQVPTLQDDRYFHPDMLAASALVRSGALATAVGIVLPGVELSA</sequence>
<comment type="catalytic activity">
    <reaction evidence="1">
        <text>L-histidine = trans-urocanate + NH4(+)</text>
        <dbReference type="Rhea" id="RHEA:21232"/>
        <dbReference type="ChEBI" id="CHEBI:17771"/>
        <dbReference type="ChEBI" id="CHEBI:28938"/>
        <dbReference type="ChEBI" id="CHEBI:57595"/>
        <dbReference type="EC" id="4.3.1.3"/>
    </reaction>
</comment>
<comment type="pathway">
    <text evidence="1">Amino-acid degradation; L-histidine degradation into L-glutamate; N-formimidoyl-L-glutamate from L-histidine: step 1/3.</text>
</comment>
<comment type="subcellular location">
    <subcellularLocation>
        <location evidence="1">Cytoplasm</location>
    </subcellularLocation>
</comment>
<comment type="PTM">
    <text evidence="1">Contains an active site 4-methylidene-imidazol-5-one (MIO), which is formed autocatalytically by cyclization and dehydration of residues Ala-Ser-Gly.</text>
</comment>
<comment type="similarity">
    <text evidence="1">Belongs to the PAL/histidase family.</text>
</comment>
<name>HUTH_XANCB</name>
<protein>
    <recommendedName>
        <fullName evidence="1">Histidine ammonia-lyase</fullName>
        <shortName evidence="1">Histidase</shortName>
        <ecNumber evidence="1">4.3.1.3</ecNumber>
    </recommendedName>
</protein>
<accession>B0RUX3</accession>
<dbReference type="EC" id="4.3.1.3" evidence="1"/>
<dbReference type="EMBL" id="AM920689">
    <property type="protein sequence ID" value="CAP52042.1"/>
    <property type="molecule type" value="Genomic_DNA"/>
</dbReference>
<dbReference type="SMR" id="B0RUX3"/>
<dbReference type="KEGG" id="xca:xcc-b100_2681"/>
<dbReference type="HOGENOM" id="CLU_014801_4_0_6"/>
<dbReference type="UniPathway" id="UPA00379">
    <property type="reaction ID" value="UER00549"/>
</dbReference>
<dbReference type="Proteomes" id="UP000001188">
    <property type="component" value="Chromosome"/>
</dbReference>
<dbReference type="GO" id="GO:0005737">
    <property type="term" value="C:cytoplasm"/>
    <property type="evidence" value="ECO:0007669"/>
    <property type="project" value="UniProtKB-SubCell"/>
</dbReference>
<dbReference type="GO" id="GO:0004397">
    <property type="term" value="F:histidine ammonia-lyase activity"/>
    <property type="evidence" value="ECO:0007669"/>
    <property type="project" value="UniProtKB-UniRule"/>
</dbReference>
<dbReference type="GO" id="GO:0019556">
    <property type="term" value="P:L-histidine catabolic process to glutamate and formamide"/>
    <property type="evidence" value="ECO:0007669"/>
    <property type="project" value="UniProtKB-UniPathway"/>
</dbReference>
<dbReference type="GO" id="GO:0019557">
    <property type="term" value="P:L-histidine catabolic process to glutamate and formate"/>
    <property type="evidence" value="ECO:0007669"/>
    <property type="project" value="UniProtKB-UniPathway"/>
</dbReference>
<dbReference type="CDD" id="cd00332">
    <property type="entry name" value="PAL-HAL"/>
    <property type="match status" value="1"/>
</dbReference>
<dbReference type="FunFam" id="1.10.275.10:FF:000005">
    <property type="entry name" value="Histidine ammonia-lyase"/>
    <property type="match status" value="1"/>
</dbReference>
<dbReference type="FunFam" id="1.20.200.10:FF:000003">
    <property type="entry name" value="Histidine ammonia-lyase"/>
    <property type="match status" value="1"/>
</dbReference>
<dbReference type="Gene3D" id="1.20.200.10">
    <property type="entry name" value="Fumarase/aspartase (Central domain)"/>
    <property type="match status" value="1"/>
</dbReference>
<dbReference type="Gene3D" id="1.10.275.10">
    <property type="entry name" value="Fumarase/aspartase (N-terminal domain)"/>
    <property type="match status" value="1"/>
</dbReference>
<dbReference type="HAMAP" id="MF_00229">
    <property type="entry name" value="His_ammonia_lyase"/>
    <property type="match status" value="1"/>
</dbReference>
<dbReference type="InterPro" id="IPR001106">
    <property type="entry name" value="Aromatic_Lyase"/>
</dbReference>
<dbReference type="InterPro" id="IPR024083">
    <property type="entry name" value="Fumarase/histidase_N"/>
</dbReference>
<dbReference type="InterPro" id="IPR005921">
    <property type="entry name" value="HutH"/>
</dbReference>
<dbReference type="InterPro" id="IPR008948">
    <property type="entry name" value="L-Aspartase-like"/>
</dbReference>
<dbReference type="InterPro" id="IPR022313">
    <property type="entry name" value="Phe/His_NH3-lyase_AS"/>
</dbReference>
<dbReference type="NCBIfam" id="TIGR01225">
    <property type="entry name" value="hutH"/>
    <property type="match status" value="1"/>
</dbReference>
<dbReference type="NCBIfam" id="NF006871">
    <property type="entry name" value="PRK09367.1"/>
    <property type="match status" value="1"/>
</dbReference>
<dbReference type="PANTHER" id="PTHR10362">
    <property type="entry name" value="HISTIDINE AMMONIA-LYASE"/>
    <property type="match status" value="1"/>
</dbReference>
<dbReference type="Pfam" id="PF00221">
    <property type="entry name" value="Lyase_aromatic"/>
    <property type="match status" value="1"/>
</dbReference>
<dbReference type="SUPFAM" id="SSF48557">
    <property type="entry name" value="L-aspartase-like"/>
    <property type="match status" value="1"/>
</dbReference>
<dbReference type="PROSITE" id="PS00488">
    <property type="entry name" value="PAL_HISTIDASE"/>
    <property type="match status" value="1"/>
</dbReference>
<feature type="chain" id="PRO_1000100457" description="Histidine ammonia-lyase">
    <location>
        <begin position="1"/>
        <end position="513"/>
    </location>
</feature>
<feature type="modified residue" description="2,3-didehydroalanine (Ser)" evidence="1">
    <location>
        <position position="144"/>
    </location>
</feature>
<feature type="cross-link" description="5-imidazolinone (Ala-Gly)" evidence="1">
    <location>
        <begin position="143"/>
        <end position="145"/>
    </location>
</feature>
<organism>
    <name type="scientific">Xanthomonas campestris pv. campestris (strain B100)</name>
    <dbReference type="NCBI Taxonomy" id="509169"/>
    <lineage>
        <taxon>Bacteria</taxon>
        <taxon>Pseudomonadati</taxon>
        <taxon>Pseudomonadota</taxon>
        <taxon>Gammaproteobacteria</taxon>
        <taxon>Lysobacterales</taxon>
        <taxon>Lysobacteraceae</taxon>
        <taxon>Xanthomonas</taxon>
    </lineage>
</organism>